<protein>
    <recommendedName>
        <fullName>Vicilin</fullName>
    </recommendedName>
</protein>
<feature type="signal peptide">
    <location>
        <begin position="1"/>
        <end position="28"/>
    </location>
</feature>
<feature type="chain" id="PRO_0000032183" description="Vicilin">
    <location>
        <begin position="29"/>
        <end position="459"/>
    </location>
</feature>
<feature type="domain" description="Cupin type-1 1" evidence="1">
    <location>
        <begin position="36"/>
        <end position="194"/>
    </location>
</feature>
<feature type="domain" description="Cupin type-1 2" evidence="1">
    <location>
        <begin position="254"/>
        <end position="426"/>
    </location>
</feature>
<feature type="region of interest" description="Disordered" evidence="2">
    <location>
        <begin position="235"/>
        <end position="258"/>
    </location>
</feature>
<feature type="region of interest" description="Disordered" evidence="2">
    <location>
        <begin position="321"/>
        <end position="346"/>
    </location>
</feature>
<feature type="region of interest" description="Disordered" evidence="2">
    <location>
        <begin position="430"/>
        <end position="459"/>
    </location>
</feature>
<feature type="compositionally biased region" description="Low complexity" evidence="2">
    <location>
        <begin position="238"/>
        <end position="251"/>
    </location>
</feature>
<feature type="compositionally biased region" description="Acidic residues" evidence="2">
    <location>
        <begin position="337"/>
        <end position="346"/>
    </location>
</feature>
<feature type="compositionally biased region" description="Basic and acidic residues" evidence="2">
    <location>
        <begin position="444"/>
        <end position="459"/>
    </location>
</feature>
<feature type="sequence conflict" description="In Ref. 2; CAA68708." evidence="3" ref="2">
    <original>V</original>
    <variation>L</variation>
    <location>
        <position position="375"/>
    </location>
</feature>
<feature type="sequence conflict" description="In Ref. 2; CAA68708." evidence="3" ref="2">
    <original>I</original>
    <variation>V</variation>
    <location>
        <position position="409"/>
    </location>
</feature>
<name>VCLC_PEA</name>
<comment type="function">
    <text>Seed storage protein.</text>
</comment>
<comment type="subcellular location">
    <subcellularLocation>
        <location>Vacuole</location>
        <location>Aleurone grain</location>
    </subcellularLocation>
    <subcellularLocation>
        <location>Vacuole</location>
    </subcellularLocation>
    <text>Cotyledonary membrane-bound vacuolar protein bodies.</text>
</comment>
<comment type="miscellaneous">
    <text>There are at least 11 genes for vicilin subunits.</text>
</comment>
<comment type="similarity">
    <text evidence="3">Belongs to the 7S seed storage protein family.</text>
</comment>
<evidence type="ECO:0000255" key="1"/>
<evidence type="ECO:0000256" key="2">
    <source>
        <dbReference type="SAM" id="MobiDB-lite"/>
    </source>
</evidence>
<evidence type="ECO:0000305" key="3"/>
<accession>P13918</accession>
<dbReference type="EMBL" id="X14076">
    <property type="protein sequence ID" value="CAA32239.1"/>
    <property type="molecule type" value="Genomic_DNA"/>
</dbReference>
<dbReference type="EMBL" id="Y00722">
    <property type="protein sequence ID" value="CAA68708.1"/>
    <property type="molecule type" value="mRNA"/>
</dbReference>
<dbReference type="PIR" id="S00567">
    <property type="entry name" value="S00567"/>
</dbReference>
<dbReference type="PIR" id="S08505">
    <property type="entry name" value="S08505"/>
</dbReference>
<dbReference type="RefSeq" id="NP_001413828.1">
    <property type="nucleotide sequence ID" value="NM_001426899.1"/>
</dbReference>
<dbReference type="SMR" id="P13918"/>
<dbReference type="Allergome" id="947">
    <property type="allergen name" value="Pis s 1"/>
</dbReference>
<dbReference type="GeneID" id="127085423"/>
<dbReference type="OrthoDB" id="1425232at2759"/>
<dbReference type="GO" id="GO:0033095">
    <property type="term" value="C:aleurone grain"/>
    <property type="evidence" value="ECO:0007669"/>
    <property type="project" value="UniProtKB-SubCell"/>
</dbReference>
<dbReference type="GO" id="GO:0005773">
    <property type="term" value="C:vacuole"/>
    <property type="evidence" value="ECO:0007669"/>
    <property type="project" value="UniProtKB-SubCell"/>
</dbReference>
<dbReference type="GO" id="GO:0045735">
    <property type="term" value="F:nutrient reservoir activity"/>
    <property type="evidence" value="ECO:0007669"/>
    <property type="project" value="UniProtKB-KW"/>
</dbReference>
<dbReference type="CDD" id="cd02245">
    <property type="entry name" value="cupin_7S_vicilin-like_C"/>
    <property type="match status" value="1"/>
</dbReference>
<dbReference type="CDD" id="cd02244">
    <property type="entry name" value="cupin_7S_vicilin-like_N"/>
    <property type="match status" value="1"/>
</dbReference>
<dbReference type="Gene3D" id="2.60.120.10">
    <property type="entry name" value="Jelly Rolls"/>
    <property type="match status" value="2"/>
</dbReference>
<dbReference type="InterPro" id="IPR006045">
    <property type="entry name" value="Cupin_1"/>
</dbReference>
<dbReference type="InterPro" id="IPR014710">
    <property type="entry name" value="RmlC-like_jellyroll"/>
</dbReference>
<dbReference type="InterPro" id="IPR011051">
    <property type="entry name" value="RmlC_Cupin_sf"/>
</dbReference>
<dbReference type="InterPro" id="IPR050253">
    <property type="entry name" value="Seed_Storage-Functional"/>
</dbReference>
<dbReference type="PANTHER" id="PTHR31189">
    <property type="entry name" value="OS03G0336100 PROTEIN-RELATED"/>
    <property type="match status" value="1"/>
</dbReference>
<dbReference type="PANTHER" id="PTHR31189:SF41">
    <property type="entry name" value="VICILIN C72"/>
    <property type="match status" value="1"/>
</dbReference>
<dbReference type="Pfam" id="PF00190">
    <property type="entry name" value="Cupin_1"/>
    <property type="match status" value="1"/>
</dbReference>
<dbReference type="SMART" id="SM00835">
    <property type="entry name" value="Cupin_1"/>
    <property type="match status" value="2"/>
</dbReference>
<dbReference type="SUPFAM" id="SSF51182">
    <property type="entry name" value="RmlC-like cupins"/>
    <property type="match status" value="2"/>
</dbReference>
<keyword id="KW-0708">Seed storage protein</keyword>
<keyword id="KW-0732">Signal</keyword>
<keyword id="KW-0758">Storage protein</keyword>
<keyword id="KW-0926">Vacuole</keyword>
<reference key="1">
    <citation type="journal article" date="1988" name="Plant Mol. Biol.">
        <title>The sequence of a pea vicilin gene and its expression in transgenic tobacco.</title>
        <authorList>
            <person name="Higgins T.J.V."/>
            <person name="Newbigin E.J."/>
            <person name="Spencer D."/>
            <person name="Llewellyn D.J."/>
            <person name="Craig S."/>
        </authorList>
        <dbReference type="AGRICOLA" id="IND92000013"/>
    </citation>
    <scope>NUCLEOTIDE SEQUENCE [GENOMIC DNA]</scope>
    <source>
        <tissue>Seedling</tissue>
    </source>
</reference>
<reference key="2">
    <citation type="journal article" date="1988" name="Biochem. J.">
        <title>Isolation and expression of a pea vicilin cDNA in the yeast Saccharomyces cerevisiae.</title>
        <authorList>
            <person name="Watson M.D."/>
            <person name="Lambert N."/>
            <person name="Delauney A."/>
            <person name="Yarwood J.N."/>
            <person name="Croy R.R.D."/>
            <person name="Gatehouse J.A."/>
            <person name="Wright D.J."/>
            <person name="Boulter D."/>
        </authorList>
    </citation>
    <scope>NUCLEOTIDE SEQUENCE [MRNA] OF 27-459 (CLONE PDUB9)</scope>
    <source>
        <strain>cv. Feltham First</strain>
    </source>
</reference>
<proteinExistence type="evidence at transcript level"/>
<organism>
    <name type="scientific">Pisum sativum</name>
    <name type="common">Garden pea</name>
    <name type="synonym">Lathyrus oleraceus</name>
    <dbReference type="NCBI Taxonomy" id="3888"/>
    <lineage>
        <taxon>Eukaryota</taxon>
        <taxon>Viridiplantae</taxon>
        <taxon>Streptophyta</taxon>
        <taxon>Embryophyta</taxon>
        <taxon>Tracheophyta</taxon>
        <taxon>Spermatophyta</taxon>
        <taxon>Magnoliopsida</taxon>
        <taxon>eudicotyledons</taxon>
        <taxon>Gunneridae</taxon>
        <taxon>Pentapetalae</taxon>
        <taxon>rosids</taxon>
        <taxon>fabids</taxon>
        <taxon>Fabales</taxon>
        <taxon>Fabaceae</taxon>
        <taxon>Papilionoideae</taxon>
        <taxon>50 kb inversion clade</taxon>
        <taxon>NPAAA clade</taxon>
        <taxon>Hologalegina</taxon>
        <taxon>IRL clade</taxon>
        <taxon>Fabeae</taxon>
        <taxon>Pisum</taxon>
    </lineage>
</organism>
<sequence>MAATTMKASFPLLMLMGISFLASVCVSSRSDPQNPFIFKSNKFQTLFENENGHIRLLQKFDQRSKIFENLQNYRLLEYKSKPHTIFLPQHTDADYILVVLSGKAILTVLKPDDRNSFNLERGDTIKLPAGTIAYLVNRDDNEELRVLDLAIPVNRPGQLQSFLLSGNQNQQNYLSGFSKNILEASFNTDYEEIEKVLLEEHEKETQHRRSLKDKRQQSQEENVIVKLSRGQIEELSKNAKSTSKKSVSSESEPFNLRSRGPIYSNEFGKFFEITPEKNPQLQDLDIFVNSVEIKEGSLLLPHYNSRAIVIVTVNEGKGDFELVGQRNENQQEQRKEDDEEEEQGEEEINKQVQNYKAKLSSGDVFVIPAGHPVAVKASSNLDLLGFGINAENNQRNFLAGDEDNVISQIQRPVKELAFPGSAQEVDRILENQKQSHFADAQPQQRERGSRETRDRLSSV</sequence>